<sequence>MASMHEALFSSRLLQVNSSFSFRCALPIISSPAAVSCAIKSTQFFKQRCRTKVRDFSLSSLSRRGFVCRAAEYKFPDPIPEFAEAETEKFRDHMLNKLSKRDLFEDSVDEIVGVCTEIFETFLRSEYGGPGTLLVIPFIDMADTLNERELPGGPQAARAAIKWAQDHVDKDWKEWTGTD</sequence>
<comment type="function">
    <text evidence="2 3">Involved in redox-mediated retrograde signaling to synchronize the expression of photosynthetic genes from both the nuclear and plastidic genomes, especially in excess light conditions (PubMed:22211401). Required for full expression of genes transcribed by the plastid-encoded RNA polymerase (PEP) (PubMed:22211401, PubMed:25161659). Essential for embryo development (PubMed:25161659).</text>
</comment>
<comment type="subunit">
    <text evidence="3">Binds DNA when in complex with CSP41b.</text>
</comment>
<comment type="subcellular location">
    <subcellularLocation>
        <location evidence="2">Plastid</location>
        <location evidence="2">Chloroplast stroma</location>
        <location evidence="2">Chloroplast nucleoid</location>
    </subcellularLocation>
</comment>
<comment type="disruption phenotype">
    <text evidence="2 3">Misregulation of photosynthesis-associated nuclear gene expression in response to excess light, and inhibition of photosynthetic electron transport (PubMed:22211401, PubMed:25161659). Defects in embryo development (PubMed:25161659). Dwarf pale plants (PubMed:22211401, PubMed:25161659). The csp41b-2 prin2-2 double mutant is embryo lethal (PubMed:25161659).</text>
</comment>
<keyword id="KW-0150">Chloroplast</keyword>
<keyword id="KW-0238">DNA-binding</keyword>
<keyword id="KW-0934">Plastid</keyword>
<keyword id="KW-1185">Reference proteome</keyword>
<keyword id="KW-0804">Transcription</keyword>
<keyword id="KW-0805">Transcription regulation</keyword>
<keyword id="KW-0809">Transit peptide</keyword>
<name>PRIN2_ARATH</name>
<feature type="transit peptide" description="Chloroplast" evidence="1">
    <location>
        <begin position="1"/>
        <end position="69"/>
    </location>
</feature>
<feature type="chain" id="PRO_0000437696" description="Protein PLASTID REDOX INSENSITIVE 2, chloroplastic">
    <location>
        <begin position="70"/>
        <end position="179"/>
    </location>
</feature>
<reference key="1">
    <citation type="journal article" date="2000" name="Nature">
        <title>Sequence and analysis of chromosome 1 of the plant Arabidopsis thaliana.</title>
        <authorList>
            <person name="Theologis A."/>
            <person name="Ecker J.R."/>
            <person name="Palm C.J."/>
            <person name="Federspiel N.A."/>
            <person name="Kaul S."/>
            <person name="White O."/>
            <person name="Alonso J."/>
            <person name="Altafi H."/>
            <person name="Araujo R."/>
            <person name="Bowman C.L."/>
            <person name="Brooks S.Y."/>
            <person name="Buehler E."/>
            <person name="Chan A."/>
            <person name="Chao Q."/>
            <person name="Chen H."/>
            <person name="Cheuk R.F."/>
            <person name="Chin C.W."/>
            <person name="Chung M.K."/>
            <person name="Conn L."/>
            <person name="Conway A.B."/>
            <person name="Conway A.R."/>
            <person name="Creasy T.H."/>
            <person name="Dewar K."/>
            <person name="Dunn P."/>
            <person name="Etgu P."/>
            <person name="Feldblyum T.V."/>
            <person name="Feng J.-D."/>
            <person name="Fong B."/>
            <person name="Fujii C.Y."/>
            <person name="Gill J.E."/>
            <person name="Goldsmith A.D."/>
            <person name="Haas B."/>
            <person name="Hansen N.F."/>
            <person name="Hughes B."/>
            <person name="Huizar L."/>
            <person name="Hunter J.L."/>
            <person name="Jenkins J."/>
            <person name="Johnson-Hopson C."/>
            <person name="Khan S."/>
            <person name="Khaykin E."/>
            <person name="Kim C.J."/>
            <person name="Koo H.L."/>
            <person name="Kremenetskaia I."/>
            <person name="Kurtz D.B."/>
            <person name="Kwan A."/>
            <person name="Lam B."/>
            <person name="Langin-Hooper S."/>
            <person name="Lee A."/>
            <person name="Lee J.M."/>
            <person name="Lenz C.A."/>
            <person name="Li J.H."/>
            <person name="Li Y.-P."/>
            <person name="Lin X."/>
            <person name="Liu S.X."/>
            <person name="Liu Z.A."/>
            <person name="Luros J.S."/>
            <person name="Maiti R."/>
            <person name="Marziali A."/>
            <person name="Militscher J."/>
            <person name="Miranda M."/>
            <person name="Nguyen M."/>
            <person name="Nierman W.C."/>
            <person name="Osborne B.I."/>
            <person name="Pai G."/>
            <person name="Peterson J."/>
            <person name="Pham P.K."/>
            <person name="Rizzo M."/>
            <person name="Rooney T."/>
            <person name="Rowley D."/>
            <person name="Sakano H."/>
            <person name="Salzberg S.L."/>
            <person name="Schwartz J.R."/>
            <person name="Shinn P."/>
            <person name="Southwick A.M."/>
            <person name="Sun H."/>
            <person name="Tallon L.J."/>
            <person name="Tambunga G."/>
            <person name="Toriumi M.J."/>
            <person name="Town C.D."/>
            <person name="Utterback T."/>
            <person name="Van Aken S."/>
            <person name="Vaysberg M."/>
            <person name="Vysotskaia V.S."/>
            <person name="Walker M."/>
            <person name="Wu D."/>
            <person name="Yu G."/>
            <person name="Fraser C.M."/>
            <person name="Venter J.C."/>
            <person name="Davis R.W."/>
        </authorList>
    </citation>
    <scope>NUCLEOTIDE SEQUENCE [LARGE SCALE GENOMIC DNA]</scope>
    <source>
        <strain>cv. Columbia</strain>
    </source>
</reference>
<reference key="2">
    <citation type="journal article" date="2017" name="Plant J.">
        <title>Araport11: a complete reannotation of the Arabidopsis thaliana reference genome.</title>
        <authorList>
            <person name="Cheng C.Y."/>
            <person name="Krishnakumar V."/>
            <person name="Chan A.P."/>
            <person name="Thibaud-Nissen F."/>
            <person name="Schobel S."/>
            <person name="Town C.D."/>
        </authorList>
    </citation>
    <scope>GENOME REANNOTATION</scope>
    <source>
        <strain>cv. Columbia</strain>
    </source>
</reference>
<reference key="3">
    <citation type="submission" date="2002-03" db="EMBL/GenBank/DDBJ databases">
        <title>Full-length cDNA from Arabidopsis thaliana.</title>
        <authorList>
            <person name="Brover V.V."/>
            <person name="Troukhan M.E."/>
            <person name="Alexandrov N.A."/>
            <person name="Lu Y.-P."/>
            <person name="Flavell R.B."/>
            <person name="Feldmann K.A."/>
        </authorList>
    </citation>
    <scope>NUCLEOTIDE SEQUENCE [LARGE SCALE MRNA]</scope>
</reference>
<reference key="4">
    <citation type="submission" date="2007-06" db="EMBL/GenBank/DDBJ databases">
        <title>Arabidopsis ORF clones.</title>
        <authorList>
            <person name="Bautista-Mercan V.R."/>
            <person name="Kim C.J."/>
            <person name="Chen H."/>
            <person name="Quan R."/>
            <person name="De Los Reyes C."/>
            <person name="Ecker J.R."/>
        </authorList>
    </citation>
    <scope>NUCLEOTIDE SEQUENCE [LARGE SCALE MRNA]</scope>
    <source>
        <strain>cv. Columbia</strain>
    </source>
</reference>
<reference key="5">
    <citation type="journal article" date="2012" name="Plant J.">
        <title>The plastid redox insensitive 2 mutant of Arabidopsis is impaired in PEP activity and high light-dependent plastid redox signalling to the nucleus.</title>
        <authorList>
            <person name="Kindgren P."/>
            <person name="Kremnev D."/>
            <person name="Blanco N.E."/>
            <person name="de Dios Barajas Lopez J."/>
            <person name="Fernandez A.P."/>
            <person name="Tellgren-Roth C."/>
            <person name="Kleine T."/>
            <person name="Small I."/>
            <person name="Strand A."/>
        </authorList>
    </citation>
    <scope>FUNCTION</scope>
    <scope>DISRUPTION PHENOTYPE</scope>
    <scope>SUBCELLULAR LOCATION</scope>
    <source>
        <strain>cv. Columbia</strain>
    </source>
</reference>
<reference key="6">
    <citation type="journal article" date="2014" name="Front. Plant Sci.">
        <title>Plastid encoded RNA polymerase activity and expression of photosynthesis genes required for embryo and seed development in Arabidopsis.</title>
        <authorList>
            <person name="Kremnev D."/>
            <person name="Strand A."/>
        </authorList>
    </citation>
    <scope>FUNCTION</scope>
    <scope>DISRUPTION PHENOTYPE</scope>
    <scope>INTERACTION WITH CSP41B</scope>
    <source>
        <strain>cv. Columbia</strain>
    </source>
</reference>
<proteinExistence type="evidence at protein level"/>
<evidence type="ECO:0000255" key="1"/>
<evidence type="ECO:0000269" key="2">
    <source>
    </source>
</evidence>
<evidence type="ECO:0000269" key="3">
    <source>
    </source>
</evidence>
<evidence type="ECO:0000303" key="4">
    <source>
    </source>
</evidence>
<evidence type="ECO:0000312" key="5">
    <source>
        <dbReference type="Araport" id="AT1G10522"/>
    </source>
</evidence>
<evidence type="ECO:0000312" key="6">
    <source>
        <dbReference type="EMBL" id="AAD39574.1"/>
    </source>
</evidence>
<organism>
    <name type="scientific">Arabidopsis thaliana</name>
    <name type="common">Mouse-ear cress</name>
    <dbReference type="NCBI Taxonomy" id="3702"/>
    <lineage>
        <taxon>Eukaryota</taxon>
        <taxon>Viridiplantae</taxon>
        <taxon>Streptophyta</taxon>
        <taxon>Embryophyta</taxon>
        <taxon>Tracheophyta</taxon>
        <taxon>Spermatophyta</taxon>
        <taxon>Magnoliopsida</taxon>
        <taxon>eudicotyledons</taxon>
        <taxon>Gunneridae</taxon>
        <taxon>Pentapetalae</taxon>
        <taxon>rosids</taxon>
        <taxon>malvids</taxon>
        <taxon>Brassicales</taxon>
        <taxon>Brassicaceae</taxon>
        <taxon>Camelineae</taxon>
        <taxon>Arabidopsis</taxon>
    </lineage>
</organism>
<gene>
    <name evidence="4" type="primary">PRIN2</name>
    <name evidence="5" type="ordered locus">At1g10522</name>
    <name evidence="6" type="ORF">T10O24.14</name>
</gene>
<accession>Q9XIK0</accession>
<dbReference type="EMBL" id="AC007067">
    <property type="protein sequence ID" value="AAD39574.1"/>
    <property type="molecule type" value="Genomic_DNA"/>
</dbReference>
<dbReference type="EMBL" id="CP002684">
    <property type="protein sequence ID" value="AEE28589.1"/>
    <property type="molecule type" value="Genomic_DNA"/>
</dbReference>
<dbReference type="EMBL" id="CP002684">
    <property type="protein sequence ID" value="AEE28590.1"/>
    <property type="molecule type" value="Genomic_DNA"/>
</dbReference>
<dbReference type="EMBL" id="AY086634">
    <property type="protein sequence ID" value="AAM63692.1"/>
    <property type="molecule type" value="mRNA"/>
</dbReference>
<dbReference type="EMBL" id="BT030627">
    <property type="protein sequence ID" value="ABR46207.1"/>
    <property type="molecule type" value="mRNA"/>
</dbReference>
<dbReference type="RefSeq" id="NP_001077502.1">
    <property type="nucleotide sequence ID" value="NM_001084033.2"/>
</dbReference>
<dbReference type="RefSeq" id="NP_563872.1">
    <property type="nucleotide sequence ID" value="NM_100927.4"/>
</dbReference>
<dbReference type="SMR" id="Q9XIK0"/>
<dbReference type="FunCoup" id="Q9XIK0">
    <property type="interactions" value="546"/>
</dbReference>
<dbReference type="STRING" id="3702.Q9XIK0"/>
<dbReference type="PaxDb" id="3702-AT1G10522.2"/>
<dbReference type="ProteomicsDB" id="226166"/>
<dbReference type="EnsemblPlants" id="AT1G10522.1">
    <property type="protein sequence ID" value="AT1G10522.1"/>
    <property type="gene ID" value="AT1G10522"/>
</dbReference>
<dbReference type="EnsemblPlants" id="AT1G10522.2">
    <property type="protein sequence ID" value="AT1G10522.2"/>
    <property type="gene ID" value="AT1G10522"/>
</dbReference>
<dbReference type="GeneID" id="837593"/>
<dbReference type="Gramene" id="AT1G10522.1">
    <property type="protein sequence ID" value="AT1G10522.1"/>
    <property type="gene ID" value="AT1G10522"/>
</dbReference>
<dbReference type="Gramene" id="AT1G10522.2">
    <property type="protein sequence ID" value="AT1G10522.2"/>
    <property type="gene ID" value="AT1G10522"/>
</dbReference>
<dbReference type="KEGG" id="ath:AT1G10522"/>
<dbReference type="Araport" id="AT1G10522"/>
<dbReference type="TAIR" id="AT1G10522">
    <property type="gene designation" value="PRIN2"/>
</dbReference>
<dbReference type="eggNOG" id="ENOG502S2MJ">
    <property type="taxonomic scope" value="Eukaryota"/>
</dbReference>
<dbReference type="HOGENOM" id="CLU_101160_1_0_1"/>
<dbReference type="InParanoid" id="Q9XIK0"/>
<dbReference type="OMA" id="ITFICKA"/>
<dbReference type="OrthoDB" id="1924990at2759"/>
<dbReference type="PhylomeDB" id="Q9XIK0"/>
<dbReference type="PRO" id="PR:Q9XIK0"/>
<dbReference type="Proteomes" id="UP000006548">
    <property type="component" value="Chromosome 1"/>
</dbReference>
<dbReference type="ExpressionAtlas" id="Q9XIK0">
    <property type="expression patterns" value="baseline and differential"/>
</dbReference>
<dbReference type="GO" id="GO:0042644">
    <property type="term" value="C:chloroplast nucleoid"/>
    <property type="evidence" value="ECO:0007669"/>
    <property type="project" value="UniProtKB-SubCell"/>
</dbReference>
<dbReference type="GO" id="GO:0042646">
    <property type="term" value="C:plastid nucleoid"/>
    <property type="evidence" value="ECO:0000314"/>
    <property type="project" value="TAIR"/>
</dbReference>
<dbReference type="GO" id="GO:0000427">
    <property type="term" value="C:plastid-encoded plastid RNA polymerase complex"/>
    <property type="evidence" value="ECO:0000315"/>
    <property type="project" value="UniProtKB"/>
</dbReference>
<dbReference type="GO" id="GO:0003677">
    <property type="term" value="F:DNA binding"/>
    <property type="evidence" value="ECO:0000314"/>
    <property type="project" value="UniProtKB"/>
</dbReference>
<dbReference type="GO" id="GO:0010468">
    <property type="term" value="P:regulation of gene expression"/>
    <property type="evidence" value="ECO:0000315"/>
    <property type="project" value="UniProtKB"/>
</dbReference>
<dbReference type="GO" id="GO:0009642">
    <property type="term" value="P:response to light intensity"/>
    <property type="evidence" value="ECO:0000315"/>
    <property type="project" value="TAIR"/>
</dbReference>
<dbReference type="InterPro" id="IPR039349">
    <property type="entry name" value="PRIN2"/>
</dbReference>
<dbReference type="PANTHER" id="PTHR35987:SF2">
    <property type="entry name" value="PROTEIN PLASTID REDOX INSENSITIVE 2, CHLOROPLASTIC"/>
    <property type="match status" value="1"/>
</dbReference>
<dbReference type="PANTHER" id="PTHR35987">
    <property type="entry name" value="PROTEIN PLASTID REDOX INSENSITIVE 2, CHLOROPLASTIC-RELATED"/>
    <property type="match status" value="1"/>
</dbReference>
<protein>
    <recommendedName>
        <fullName evidence="4">Protein PLASTID REDOX INSENSITIVE 2, chloroplastic</fullName>
    </recommendedName>
</protein>